<feature type="chain" id="PRO_1000189181" description="Isoleucine--tRNA ligase">
    <location>
        <begin position="1"/>
        <end position="892"/>
    </location>
</feature>
<feature type="short sequence motif" description="'HIGH' region">
    <location>
        <begin position="60"/>
        <end position="70"/>
    </location>
</feature>
<feature type="short sequence motif" description="'KMSKS' region">
    <location>
        <begin position="593"/>
        <end position="597"/>
    </location>
</feature>
<feature type="binding site" evidence="1">
    <location>
        <position position="552"/>
    </location>
    <ligand>
        <name>L-isoleucyl-5'-AMP</name>
        <dbReference type="ChEBI" id="CHEBI:178002"/>
    </ligand>
</feature>
<feature type="binding site" evidence="1">
    <location>
        <position position="596"/>
    </location>
    <ligand>
        <name>ATP</name>
        <dbReference type="ChEBI" id="CHEBI:30616"/>
    </ligand>
</feature>
<feature type="binding site" evidence="1">
    <location>
        <position position="862"/>
    </location>
    <ligand>
        <name>Zn(2+)</name>
        <dbReference type="ChEBI" id="CHEBI:29105"/>
    </ligand>
</feature>
<feature type="binding site" evidence="1">
    <location>
        <position position="865"/>
    </location>
    <ligand>
        <name>Zn(2+)</name>
        <dbReference type="ChEBI" id="CHEBI:29105"/>
    </ligand>
</feature>
<feature type="binding site" evidence="1">
    <location>
        <position position="879"/>
    </location>
    <ligand>
        <name>Zn(2+)</name>
        <dbReference type="ChEBI" id="CHEBI:29105"/>
    </ligand>
</feature>
<feature type="binding site" evidence="1">
    <location>
        <position position="882"/>
    </location>
    <ligand>
        <name>Zn(2+)</name>
        <dbReference type="ChEBI" id="CHEBI:29105"/>
    </ligand>
</feature>
<accession>A5IY09</accession>
<gene>
    <name evidence="1" type="primary">ileS</name>
    <name type="ordered locus">MAG2200</name>
</gene>
<sequence length="892" mass="102793">MSEIDYKETLNMPKTDFEMRANLTTKEPLFREKWEKDNLYARVLEKNKNNTPFVLHDGPPYANGSIHIGHALNKILKDIIVRYKSMCGFYSPYVPGWDTHGLPIELKMLTDAKINYKVISPIELRKRASEYADIQIENQISQFKSLQLLTDFKKIYKTKEPKFEAAQLKLFKKMVLDGLVYKGLKPVYWSPSSQTALAEAEVEYHDVDSPSIYVALEIIDQNGSQKVKNGDKLVIWTTTPWTLLANAAVAIGENFVYCRVEHNNQGYIVAKELANKFIEISKLDNAQISVDFNANELIGIKYKSVLNDLVCPVVIGHHVSLESGTGLVHIAPLFGEDDFQIGTANSLEMIMHVEDDGVLNDAAGKYKGIFYEKANAQIFDKLTSKSALLAKGTIRHSYPHDWRTHKPILFRGTPQWFVSIDKIRQQLLNELESINTYPEWAKKRLVNMISERKDWTISRQRTWGVPIIIFYDKDGKPVINSAIFDYVIDLVEKYGTDIWWEKEADELLPEEFRSNGYTKEMDIMDVWFDSGTTSLAVEIDEKLKPPYDLYLEGSDQYRGWFNSSLINSVAYTHKSPYKQIVSHGFVLDSKGEKMSKSKGNVVDPLKVIKKYGADILRLWVANAEYTNDVNISDEIINQNSEIYRKIRNTIKFLLGNLNGYEYDESVKRTGVHQYIYNELESIKEKVYKAYDEYNFSSVIKTINKYVVELSSFYLNITKDILYVHEFDSNERMMTLANFYDITNFLIKAIAPIIPTTAEDAYMHFYKKNKLESIHLENFDIVKPYDSNVLKEWEEFFSLKDEVNLLLENAIKSGLIKRTNEAKVTIKNPSEVIKGYDLKQLLMVGAIEFGNVSKVESFMSEKCNRCWNHFSPAQIKDNLCPLCYKIVQKVNGK</sequence>
<keyword id="KW-0030">Aminoacyl-tRNA synthetase</keyword>
<keyword id="KW-0067">ATP-binding</keyword>
<keyword id="KW-0963">Cytoplasm</keyword>
<keyword id="KW-0436">Ligase</keyword>
<keyword id="KW-0479">Metal-binding</keyword>
<keyword id="KW-0547">Nucleotide-binding</keyword>
<keyword id="KW-0648">Protein biosynthesis</keyword>
<keyword id="KW-1185">Reference proteome</keyword>
<keyword id="KW-0862">Zinc</keyword>
<name>SYI_MYCAP</name>
<reference key="1">
    <citation type="journal article" date="2007" name="PLoS Genet.">
        <title>Being pathogenic, plastic, and sexual while living with a nearly minimal bacterial genome.</title>
        <authorList>
            <person name="Sirand-Pugnet P."/>
            <person name="Lartigue C."/>
            <person name="Marenda M."/>
            <person name="Jacob D."/>
            <person name="Barre A."/>
            <person name="Barbe V."/>
            <person name="Schenowitz C."/>
            <person name="Mangenot S."/>
            <person name="Couloux A."/>
            <person name="Segurens B."/>
            <person name="de Daruvar A."/>
            <person name="Blanchard A."/>
            <person name="Citti C."/>
        </authorList>
    </citation>
    <scope>NUCLEOTIDE SEQUENCE [LARGE SCALE GENOMIC DNA]</scope>
    <source>
        <strain>NCTC 10123 / CIP 59.7 / PG2</strain>
    </source>
</reference>
<organism>
    <name type="scientific">Mycoplasmopsis agalactiae (strain NCTC 10123 / CIP 59.7 / PG2)</name>
    <name type="common">Mycoplasma agalactiae</name>
    <dbReference type="NCBI Taxonomy" id="347257"/>
    <lineage>
        <taxon>Bacteria</taxon>
        <taxon>Bacillati</taxon>
        <taxon>Mycoplasmatota</taxon>
        <taxon>Mycoplasmoidales</taxon>
        <taxon>Metamycoplasmataceae</taxon>
        <taxon>Mycoplasmopsis</taxon>
    </lineage>
</organism>
<dbReference type="EC" id="6.1.1.5" evidence="1"/>
<dbReference type="EMBL" id="CU179680">
    <property type="protein sequence ID" value="CAL58918.1"/>
    <property type="molecule type" value="Genomic_DNA"/>
</dbReference>
<dbReference type="RefSeq" id="WP_011949399.1">
    <property type="nucleotide sequence ID" value="NC_009497.1"/>
</dbReference>
<dbReference type="SMR" id="A5IY09"/>
<dbReference type="STRING" id="347257.MAG2200"/>
<dbReference type="GeneID" id="93357982"/>
<dbReference type="KEGG" id="maa:MAG2200"/>
<dbReference type="HOGENOM" id="CLU_001493_7_0_14"/>
<dbReference type="Proteomes" id="UP000007065">
    <property type="component" value="Chromosome"/>
</dbReference>
<dbReference type="GO" id="GO:0005829">
    <property type="term" value="C:cytosol"/>
    <property type="evidence" value="ECO:0007669"/>
    <property type="project" value="TreeGrafter"/>
</dbReference>
<dbReference type="GO" id="GO:0002161">
    <property type="term" value="F:aminoacyl-tRNA deacylase activity"/>
    <property type="evidence" value="ECO:0007669"/>
    <property type="project" value="InterPro"/>
</dbReference>
<dbReference type="GO" id="GO:0005524">
    <property type="term" value="F:ATP binding"/>
    <property type="evidence" value="ECO:0007669"/>
    <property type="project" value="UniProtKB-UniRule"/>
</dbReference>
<dbReference type="GO" id="GO:0004822">
    <property type="term" value="F:isoleucine-tRNA ligase activity"/>
    <property type="evidence" value="ECO:0007669"/>
    <property type="project" value="UniProtKB-UniRule"/>
</dbReference>
<dbReference type="GO" id="GO:0000049">
    <property type="term" value="F:tRNA binding"/>
    <property type="evidence" value="ECO:0007669"/>
    <property type="project" value="InterPro"/>
</dbReference>
<dbReference type="GO" id="GO:0008270">
    <property type="term" value="F:zinc ion binding"/>
    <property type="evidence" value="ECO:0007669"/>
    <property type="project" value="UniProtKB-UniRule"/>
</dbReference>
<dbReference type="GO" id="GO:0006428">
    <property type="term" value="P:isoleucyl-tRNA aminoacylation"/>
    <property type="evidence" value="ECO:0007669"/>
    <property type="project" value="UniProtKB-UniRule"/>
</dbReference>
<dbReference type="CDD" id="cd07960">
    <property type="entry name" value="Anticodon_Ia_Ile_BEm"/>
    <property type="match status" value="1"/>
</dbReference>
<dbReference type="CDD" id="cd00818">
    <property type="entry name" value="IleRS_core"/>
    <property type="match status" value="1"/>
</dbReference>
<dbReference type="FunFam" id="3.40.50.620:FF:000152">
    <property type="entry name" value="Isoleucine--tRNA ligase"/>
    <property type="match status" value="1"/>
</dbReference>
<dbReference type="Gene3D" id="1.10.730.20">
    <property type="match status" value="1"/>
</dbReference>
<dbReference type="Gene3D" id="3.40.50.620">
    <property type="entry name" value="HUPs"/>
    <property type="match status" value="2"/>
</dbReference>
<dbReference type="Gene3D" id="1.10.10.830">
    <property type="entry name" value="Ile-tRNA synthetase CP2 domain-like"/>
    <property type="match status" value="1"/>
</dbReference>
<dbReference type="HAMAP" id="MF_02002">
    <property type="entry name" value="Ile_tRNA_synth_type1"/>
    <property type="match status" value="1"/>
</dbReference>
<dbReference type="InterPro" id="IPR001412">
    <property type="entry name" value="aa-tRNA-synth_I_CS"/>
</dbReference>
<dbReference type="InterPro" id="IPR002300">
    <property type="entry name" value="aa-tRNA-synth_Ia"/>
</dbReference>
<dbReference type="InterPro" id="IPR033708">
    <property type="entry name" value="Anticodon_Ile_BEm"/>
</dbReference>
<dbReference type="InterPro" id="IPR002301">
    <property type="entry name" value="Ile-tRNA-ligase"/>
</dbReference>
<dbReference type="InterPro" id="IPR023585">
    <property type="entry name" value="Ile-tRNA-ligase_type1"/>
</dbReference>
<dbReference type="InterPro" id="IPR050081">
    <property type="entry name" value="Ile-tRNA_ligase"/>
</dbReference>
<dbReference type="InterPro" id="IPR013155">
    <property type="entry name" value="M/V/L/I-tRNA-synth_anticd-bd"/>
</dbReference>
<dbReference type="InterPro" id="IPR014729">
    <property type="entry name" value="Rossmann-like_a/b/a_fold"/>
</dbReference>
<dbReference type="InterPro" id="IPR009080">
    <property type="entry name" value="tRNAsynth_Ia_anticodon-bd"/>
</dbReference>
<dbReference type="InterPro" id="IPR009008">
    <property type="entry name" value="Val/Leu/Ile-tRNA-synth_edit"/>
</dbReference>
<dbReference type="InterPro" id="IPR010663">
    <property type="entry name" value="Znf_FPG/IleRS"/>
</dbReference>
<dbReference type="NCBIfam" id="TIGR00392">
    <property type="entry name" value="ileS"/>
    <property type="match status" value="1"/>
</dbReference>
<dbReference type="PANTHER" id="PTHR42765:SF1">
    <property type="entry name" value="ISOLEUCINE--TRNA LIGASE, MITOCHONDRIAL"/>
    <property type="match status" value="1"/>
</dbReference>
<dbReference type="PANTHER" id="PTHR42765">
    <property type="entry name" value="SOLEUCYL-TRNA SYNTHETASE"/>
    <property type="match status" value="1"/>
</dbReference>
<dbReference type="Pfam" id="PF08264">
    <property type="entry name" value="Anticodon_1"/>
    <property type="match status" value="1"/>
</dbReference>
<dbReference type="Pfam" id="PF00133">
    <property type="entry name" value="tRNA-synt_1"/>
    <property type="match status" value="1"/>
</dbReference>
<dbReference type="Pfam" id="PF06827">
    <property type="entry name" value="zf-FPG_IleRS"/>
    <property type="match status" value="1"/>
</dbReference>
<dbReference type="PRINTS" id="PR00984">
    <property type="entry name" value="TRNASYNTHILE"/>
</dbReference>
<dbReference type="SUPFAM" id="SSF47323">
    <property type="entry name" value="Anticodon-binding domain of a subclass of class I aminoacyl-tRNA synthetases"/>
    <property type="match status" value="1"/>
</dbReference>
<dbReference type="SUPFAM" id="SSF52374">
    <property type="entry name" value="Nucleotidylyl transferase"/>
    <property type="match status" value="1"/>
</dbReference>
<dbReference type="SUPFAM" id="SSF50677">
    <property type="entry name" value="ValRS/IleRS/LeuRS editing domain"/>
    <property type="match status" value="1"/>
</dbReference>
<dbReference type="PROSITE" id="PS00178">
    <property type="entry name" value="AA_TRNA_LIGASE_I"/>
    <property type="match status" value="1"/>
</dbReference>
<proteinExistence type="inferred from homology"/>
<evidence type="ECO:0000255" key="1">
    <source>
        <dbReference type="HAMAP-Rule" id="MF_02002"/>
    </source>
</evidence>
<protein>
    <recommendedName>
        <fullName evidence="1">Isoleucine--tRNA ligase</fullName>
        <ecNumber evidence="1">6.1.1.5</ecNumber>
    </recommendedName>
    <alternativeName>
        <fullName evidence="1">Isoleucyl-tRNA synthetase</fullName>
        <shortName evidence="1">IleRS</shortName>
    </alternativeName>
</protein>
<comment type="function">
    <text evidence="1">Catalyzes the attachment of isoleucine to tRNA(Ile). As IleRS can inadvertently accommodate and process structurally similar amino acids such as valine, to avoid such errors it has two additional distinct tRNA(Ile)-dependent editing activities. One activity is designated as 'pretransfer' editing and involves the hydrolysis of activated Val-AMP. The other activity is designated 'posttransfer' editing and involves deacylation of mischarged Val-tRNA(Ile).</text>
</comment>
<comment type="catalytic activity">
    <reaction evidence="1">
        <text>tRNA(Ile) + L-isoleucine + ATP = L-isoleucyl-tRNA(Ile) + AMP + diphosphate</text>
        <dbReference type="Rhea" id="RHEA:11060"/>
        <dbReference type="Rhea" id="RHEA-COMP:9666"/>
        <dbReference type="Rhea" id="RHEA-COMP:9695"/>
        <dbReference type="ChEBI" id="CHEBI:30616"/>
        <dbReference type="ChEBI" id="CHEBI:33019"/>
        <dbReference type="ChEBI" id="CHEBI:58045"/>
        <dbReference type="ChEBI" id="CHEBI:78442"/>
        <dbReference type="ChEBI" id="CHEBI:78528"/>
        <dbReference type="ChEBI" id="CHEBI:456215"/>
        <dbReference type="EC" id="6.1.1.5"/>
    </reaction>
</comment>
<comment type="cofactor">
    <cofactor evidence="1">
        <name>Zn(2+)</name>
        <dbReference type="ChEBI" id="CHEBI:29105"/>
    </cofactor>
    <text evidence="1">Binds 1 zinc ion per subunit.</text>
</comment>
<comment type="subunit">
    <text evidence="1">Monomer.</text>
</comment>
<comment type="subcellular location">
    <subcellularLocation>
        <location evidence="1">Cytoplasm</location>
    </subcellularLocation>
</comment>
<comment type="domain">
    <text evidence="1">IleRS has two distinct active sites: one for aminoacylation and one for editing. The misactivated valine is translocated from the active site to the editing site, which sterically excludes the correctly activated isoleucine. The single editing site contains two valyl binding pockets, one specific for each substrate (Val-AMP or Val-tRNA(Ile)).</text>
</comment>
<comment type="similarity">
    <text evidence="1">Belongs to the class-I aminoacyl-tRNA synthetase family. IleS type 1 subfamily.</text>
</comment>